<gene>
    <name evidence="1" type="primary">pyrB</name>
    <name type="ordered locus">DNO_0490</name>
</gene>
<reference key="1">
    <citation type="journal article" date="2007" name="Nat. Biotechnol.">
        <title>Genome sequence and identification of candidate vaccine antigens from the animal pathogen Dichelobacter nodosus.</title>
        <authorList>
            <person name="Myers G.S.A."/>
            <person name="Parker D."/>
            <person name="Al-Hasani K."/>
            <person name="Kennan R.M."/>
            <person name="Seemann T."/>
            <person name="Ren Q."/>
            <person name="Badger J.H."/>
            <person name="Selengut J.D."/>
            <person name="Deboy R.T."/>
            <person name="Tettelin H."/>
            <person name="Boyce J.D."/>
            <person name="McCarl V.P."/>
            <person name="Han X."/>
            <person name="Nelson W.C."/>
            <person name="Madupu R."/>
            <person name="Mohamoud Y."/>
            <person name="Holley T."/>
            <person name="Fedorova N."/>
            <person name="Khouri H."/>
            <person name="Bottomley S.P."/>
            <person name="Whittington R.J."/>
            <person name="Adler B."/>
            <person name="Songer J.G."/>
            <person name="Rood J.I."/>
            <person name="Paulsen I.T."/>
        </authorList>
    </citation>
    <scope>NUCLEOTIDE SEQUENCE [LARGE SCALE GENOMIC DNA]</scope>
    <source>
        <strain>VCS1703A</strain>
    </source>
</reference>
<feature type="chain" id="PRO_0000321099" description="Aspartate carbamoyltransferase catalytic subunit">
    <location>
        <begin position="1"/>
        <end position="348"/>
    </location>
</feature>
<feature type="binding site" evidence="1">
    <location>
        <position position="57"/>
    </location>
    <ligand>
        <name>carbamoyl phosphate</name>
        <dbReference type="ChEBI" id="CHEBI:58228"/>
    </ligand>
</feature>
<feature type="binding site" evidence="1">
    <location>
        <position position="58"/>
    </location>
    <ligand>
        <name>carbamoyl phosphate</name>
        <dbReference type="ChEBI" id="CHEBI:58228"/>
    </ligand>
</feature>
<feature type="binding site" evidence="1">
    <location>
        <position position="86"/>
    </location>
    <ligand>
        <name>L-aspartate</name>
        <dbReference type="ChEBI" id="CHEBI:29991"/>
    </ligand>
</feature>
<feature type="binding site" evidence="1">
    <location>
        <position position="107"/>
    </location>
    <ligand>
        <name>carbamoyl phosphate</name>
        <dbReference type="ChEBI" id="CHEBI:58228"/>
    </ligand>
</feature>
<feature type="binding site" evidence="1">
    <location>
        <position position="135"/>
    </location>
    <ligand>
        <name>carbamoyl phosphate</name>
        <dbReference type="ChEBI" id="CHEBI:58228"/>
    </ligand>
</feature>
<feature type="binding site" evidence="1">
    <location>
        <position position="138"/>
    </location>
    <ligand>
        <name>carbamoyl phosphate</name>
        <dbReference type="ChEBI" id="CHEBI:58228"/>
    </ligand>
</feature>
<feature type="binding site" evidence="1">
    <location>
        <position position="172"/>
    </location>
    <ligand>
        <name>L-aspartate</name>
        <dbReference type="ChEBI" id="CHEBI:29991"/>
    </ligand>
</feature>
<feature type="binding site" evidence="1">
    <location>
        <position position="234"/>
    </location>
    <ligand>
        <name>L-aspartate</name>
        <dbReference type="ChEBI" id="CHEBI:29991"/>
    </ligand>
</feature>
<feature type="binding site" evidence="1">
    <location>
        <position position="274"/>
    </location>
    <ligand>
        <name>carbamoyl phosphate</name>
        <dbReference type="ChEBI" id="CHEBI:58228"/>
    </ligand>
</feature>
<feature type="binding site" evidence="1">
    <location>
        <position position="275"/>
    </location>
    <ligand>
        <name>carbamoyl phosphate</name>
        <dbReference type="ChEBI" id="CHEBI:58228"/>
    </ligand>
</feature>
<evidence type="ECO:0000255" key="1">
    <source>
        <dbReference type="HAMAP-Rule" id="MF_00001"/>
    </source>
</evidence>
<protein>
    <recommendedName>
        <fullName evidence="1">Aspartate carbamoyltransferase catalytic subunit</fullName>
        <ecNumber evidence="1">2.1.3.2</ecNumber>
    </recommendedName>
    <alternativeName>
        <fullName evidence="1">Aspartate transcarbamylase</fullName>
        <shortName evidence="1">ATCase</shortName>
    </alternativeName>
</protein>
<dbReference type="EC" id="2.1.3.2" evidence="1"/>
<dbReference type="EMBL" id="CP000513">
    <property type="protein sequence ID" value="ABQ14273.1"/>
    <property type="molecule type" value="Genomic_DNA"/>
</dbReference>
<dbReference type="RefSeq" id="WP_012030826.1">
    <property type="nucleotide sequence ID" value="NC_009446.1"/>
</dbReference>
<dbReference type="SMR" id="A5EVP6"/>
<dbReference type="STRING" id="246195.DNO_0490"/>
<dbReference type="KEGG" id="dno:DNO_0490"/>
<dbReference type="eggNOG" id="COG0540">
    <property type="taxonomic scope" value="Bacteria"/>
</dbReference>
<dbReference type="HOGENOM" id="CLU_043846_1_2_6"/>
<dbReference type="OrthoDB" id="9774690at2"/>
<dbReference type="UniPathway" id="UPA00070">
    <property type="reaction ID" value="UER00116"/>
</dbReference>
<dbReference type="Proteomes" id="UP000000248">
    <property type="component" value="Chromosome"/>
</dbReference>
<dbReference type="GO" id="GO:0005829">
    <property type="term" value="C:cytosol"/>
    <property type="evidence" value="ECO:0007669"/>
    <property type="project" value="TreeGrafter"/>
</dbReference>
<dbReference type="GO" id="GO:0016597">
    <property type="term" value="F:amino acid binding"/>
    <property type="evidence" value="ECO:0007669"/>
    <property type="project" value="InterPro"/>
</dbReference>
<dbReference type="GO" id="GO:0004070">
    <property type="term" value="F:aspartate carbamoyltransferase activity"/>
    <property type="evidence" value="ECO:0007669"/>
    <property type="project" value="UniProtKB-UniRule"/>
</dbReference>
<dbReference type="GO" id="GO:0006207">
    <property type="term" value="P:'de novo' pyrimidine nucleobase biosynthetic process"/>
    <property type="evidence" value="ECO:0007669"/>
    <property type="project" value="InterPro"/>
</dbReference>
<dbReference type="GO" id="GO:0044205">
    <property type="term" value="P:'de novo' UMP biosynthetic process"/>
    <property type="evidence" value="ECO:0007669"/>
    <property type="project" value="UniProtKB-UniRule"/>
</dbReference>
<dbReference type="GO" id="GO:0006520">
    <property type="term" value="P:amino acid metabolic process"/>
    <property type="evidence" value="ECO:0007669"/>
    <property type="project" value="InterPro"/>
</dbReference>
<dbReference type="Gene3D" id="3.40.50.1370">
    <property type="entry name" value="Aspartate/ornithine carbamoyltransferase"/>
    <property type="match status" value="2"/>
</dbReference>
<dbReference type="HAMAP" id="MF_00001">
    <property type="entry name" value="Asp_carb_tr"/>
    <property type="match status" value="1"/>
</dbReference>
<dbReference type="InterPro" id="IPR006132">
    <property type="entry name" value="Asp/Orn_carbamoyltranf_P-bd"/>
</dbReference>
<dbReference type="InterPro" id="IPR006130">
    <property type="entry name" value="Asp/Orn_carbamoylTrfase"/>
</dbReference>
<dbReference type="InterPro" id="IPR036901">
    <property type="entry name" value="Asp/Orn_carbamoylTrfase_sf"/>
</dbReference>
<dbReference type="InterPro" id="IPR002082">
    <property type="entry name" value="Asp_carbamoyltransf"/>
</dbReference>
<dbReference type="InterPro" id="IPR006131">
    <property type="entry name" value="Asp_carbamoyltransf_Asp/Orn-bd"/>
</dbReference>
<dbReference type="NCBIfam" id="TIGR00670">
    <property type="entry name" value="asp_carb_tr"/>
    <property type="match status" value="1"/>
</dbReference>
<dbReference type="NCBIfam" id="NF002032">
    <property type="entry name" value="PRK00856.1"/>
    <property type="match status" value="1"/>
</dbReference>
<dbReference type="PANTHER" id="PTHR45753:SF6">
    <property type="entry name" value="ASPARTATE CARBAMOYLTRANSFERASE"/>
    <property type="match status" value="1"/>
</dbReference>
<dbReference type="PANTHER" id="PTHR45753">
    <property type="entry name" value="ORNITHINE CARBAMOYLTRANSFERASE, MITOCHONDRIAL"/>
    <property type="match status" value="1"/>
</dbReference>
<dbReference type="Pfam" id="PF00185">
    <property type="entry name" value="OTCace"/>
    <property type="match status" value="1"/>
</dbReference>
<dbReference type="Pfam" id="PF02729">
    <property type="entry name" value="OTCace_N"/>
    <property type="match status" value="1"/>
</dbReference>
<dbReference type="PRINTS" id="PR00100">
    <property type="entry name" value="AOTCASE"/>
</dbReference>
<dbReference type="PRINTS" id="PR00101">
    <property type="entry name" value="ATCASE"/>
</dbReference>
<dbReference type="SUPFAM" id="SSF53671">
    <property type="entry name" value="Aspartate/ornithine carbamoyltransferase"/>
    <property type="match status" value="1"/>
</dbReference>
<dbReference type="PROSITE" id="PS00097">
    <property type="entry name" value="CARBAMOYLTRANSFERASE"/>
    <property type="match status" value="1"/>
</dbReference>
<proteinExistence type="inferred from homology"/>
<comment type="function">
    <text evidence="1">Catalyzes the condensation of carbamoyl phosphate and aspartate to form carbamoyl aspartate and inorganic phosphate, the committed step in the de novo pyrimidine nucleotide biosynthesis pathway.</text>
</comment>
<comment type="catalytic activity">
    <reaction evidence="1">
        <text>carbamoyl phosphate + L-aspartate = N-carbamoyl-L-aspartate + phosphate + H(+)</text>
        <dbReference type="Rhea" id="RHEA:20013"/>
        <dbReference type="ChEBI" id="CHEBI:15378"/>
        <dbReference type="ChEBI" id="CHEBI:29991"/>
        <dbReference type="ChEBI" id="CHEBI:32814"/>
        <dbReference type="ChEBI" id="CHEBI:43474"/>
        <dbReference type="ChEBI" id="CHEBI:58228"/>
        <dbReference type="EC" id="2.1.3.2"/>
    </reaction>
</comment>
<comment type="pathway">
    <text evidence="1">Pyrimidine metabolism; UMP biosynthesis via de novo pathway; (S)-dihydroorotate from bicarbonate: step 2/3.</text>
</comment>
<comment type="subunit">
    <text evidence="1">Heterododecamer (2C3:3R2) of six catalytic PyrB chains organized as two trimers (C3), and six regulatory PyrI chains organized as three dimers (R2).</text>
</comment>
<comment type="similarity">
    <text evidence="1">Belongs to the aspartate/ornithine carbamoyltransferase superfamily. ATCase family.</text>
</comment>
<name>PYRB_DICNV</name>
<accession>A5EVP6</accession>
<sequence length="348" mass="38764">MSLVGCHILSIDHFSRQDLEELLMTAKLLEPVAQRKVRCNVLDGSVMANLFFEASTRTRMSFHTAFARLGGSVVDTTGFTFSSISKGESLSDTARVIAGYADVIVMRHPDQGSVAEFASKINVPVINAGDGIGEHPSQALLDYYTINNEFERLKKNIDGMTIAMVGDLKNGRTIHSLAKLLSLFDNIHFRFIAPETLRAPAELLELLRSRGHDVQEFDDIANGLPGTDIIYATRIQRERIKDGELMEGYSEKFRINAAAVARYATPETIIMHPLPRDSRAGAFDLSTDLDNHPQLAIFRQADNGVTVRMAIFAMVLNVHRGIESFFSPHRGFRPDRYGQGDADFYQLK</sequence>
<keyword id="KW-0665">Pyrimidine biosynthesis</keyword>
<keyword id="KW-1185">Reference proteome</keyword>
<keyword id="KW-0808">Transferase</keyword>
<organism>
    <name type="scientific">Dichelobacter nodosus (strain VCS1703A)</name>
    <dbReference type="NCBI Taxonomy" id="246195"/>
    <lineage>
        <taxon>Bacteria</taxon>
        <taxon>Pseudomonadati</taxon>
        <taxon>Pseudomonadota</taxon>
        <taxon>Gammaproteobacteria</taxon>
        <taxon>Cardiobacteriales</taxon>
        <taxon>Cardiobacteriaceae</taxon>
        <taxon>Dichelobacter</taxon>
    </lineage>
</organism>